<sequence length="249" mass="29177">MTKDETLLVFTLVVSSVSVFLFGILLFMVLISATRDFRERTKSKLVKIMIWAGIVVITFAIAVRIYPIFIFLLKERIKPLVEALYDKLPWIWEVSLSRYWDRLIDFLDRYLWACAQRIQTGIRKQKGEFVVTFSCRVKKRLYARAIEVGIHLSLLSNLFWILKTTLAVGYRLLWVLYYIISFEGFLGSFRLYLVYFGFYCLLFSGKWLRTSEDRGERQAQISGILLRGMLIECAFSVLCLEEDSNLHAL</sequence>
<feature type="chain" id="PRO_0000288625" description="Uncharacterized protein ycf73">
    <location>
        <begin position="1"/>
        <end position="249"/>
    </location>
</feature>
<accession>P0C311</accession>
<proteinExistence type="inferred from homology"/>
<reference key="1">
    <citation type="journal article" date="2004" name="Plant Physiol.">
        <title>A comparison of rice chloroplast genomes.</title>
        <authorList>
            <person name="Tang J."/>
            <person name="Xia H."/>
            <person name="Cao M."/>
            <person name="Zhang X."/>
            <person name="Zeng W."/>
            <person name="Hu S."/>
            <person name="Tong W."/>
            <person name="Wang J."/>
            <person name="Wang J."/>
            <person name="Yu J."/>
            <person name="Yang H."/>
            <person name="Zhu L."/>
        </authorList>
    </citation>
    <scope>NUCLEOTIDE SEQUENCE [LARGE SCALE GENOMIC DNA]</scope>
    <source>
        <strain>cv. 93-11</strain>
    </source>
</reference>
<protein>
    <recommendedName>
        <fullName>Uncharacterized protein ycf73</fullName>
    </recommendedName>
</protein>
<gene>
    <name type="primary">ycf73-A</name>
</gene>
<gene>
    <name type="primary">ycf73-B</name>
</gene>
<comment type="subcellular location">
    <subcellularLocation>
        <location>Plastid</location>
        <location>Chloroplast</location>
    </subcellularLocation>
</comment>
<comment type="similarity">
    <text evidence="1">Belongs to the ycf73 family.</text>
</comment>
<evidence type="ECO:0000305" key="1"/>
<keyword id="KW-0150">Chloroplast</keyword>
<keyword id="KW-0934">Plastid</keyword>
<keyword id="KW-1185">Reference proteome</keyword>
<geneLocation type="chloroplast"/>
<name>YCF73_ORYSI</name>
<dbReference type="EMBL" id="AY522329">
    <property type="status" value="NOT_ANNOTATED_CDS"/>
    <property type="molecule type" value="Genomic_DNA"/>
</dbReference>
<dbReference type="SMR" id="P0C311"/>
<dbReference type="Proteomes" id="UP000007015">
    <property type="component" value="Chloroplast"/>
</dbReference>
<dbReference type="GO" id="GO:0009507">
    <property type="term" value="C:chloroplast"/>
    <property type="evidence" value="ECO:0007669"/>
    <property type="project" value="UniProtKB-SubCell"/>
</dbReference>
<dbReference type="GO" id="GO:0009536">
    <property type="term" value="C:plastid"/>
    <property type="evidence" value="ECO:0000305"/>
    <property type="project" value="Gramene"/>
</dbReference>
<organism>
    <name type="scientific">Oryza sativa subsp. indica</name>
    <name type="common">Rice</name>
    <dbReference type="NCBI Taxonomy" id="39946"/>
    <lineage>
        <taxon>Eukaryota</taxon>
        <taxon>Viridiplantae</taxon>
        <taxon>Streptophyta</taxon>
        <taxon>Embryophyta</taxon>
        <taxon>Tracheophyta</taxon>
        <taxon>Spermatophyta</taxon>
        <taxon>Magnoliopsida</taxon>
        <taxon>Liliopsida</taxon>
        <taxon>Poales</taxon>
        <taxon>Poaceae</taxon>
        <taxon>BOP clade</taxon>
        <taxon>Oryzoideae</taxon>
        <taxon>Oryzeae</taxon>
        <taxon>Oryzinae</taxon>
        <taxon>Oryza</taxon>
        <taxon>Oryza sativa</taxon>
    </lineage>
</organism>